<keyword id="KW-1185">Reference proteome</keyword>
<keyword id="KW-0687">Ribonucleoprotein</keyword>
<keyword id="KW-0689">Ribosomal protein</keyword>
<sequence length="46" mass="5310">MATKRTFQPSNLKRARDHGFRARMATADGRKILARRRAKGRKRLSA</sequence>
<proteinExistence type="inferred from homology"/>
<protein>
    <recommendedName>
        <fullName evidence="1">Large ribosomal subunit protein bL34</fullName>
    </recommendedName>
    <alternativeName>
        <fullName evidence="3">50S ribosomal protein L34</fullName>
    </alternativeName>
</protein>
<gene>
    <name evidence="1" type="primary">rpmH</name>
    <name type="ordered locus">XOO4957</name>
</gene>
<evidence type="ECO:0000255" key="1">
    <source>
        <dbReference type="HAMAP-Rule" id="MF_00391"/>
    </source>
</evidence>
<evidence type="ECO:0000256" key="2">
    <source>
        <dbReference type="SAM" id="MobiDB-lite"/>
    </source>
</evidence>
<evidence type="ECO:0000305" key="3"/>
<feature type="chain" id="PRO_1000013494" description="Large ribosomal subunit protein bL34">
    <location>
        <begin position="1"/>
        <end position="46"/>
    </location>
</feature>
<feature type="region of interest" description="Disordered" evidence="2">
    <location>
        <begin position="1"/>
        <end position="46"/>
    </location>
</feature>
<feature type="compositionally biased region" description="Polar residues" evidence="2">
    <location>
        <begin position="1"/>
        <end position="11"/>
    </location>
</feature>
<feature type="compositionally biased region" description="Basic residues" evidence="2">
    <location>
        <begin position="32"/>
        <end position="46"/>
    </location>
</feature>
<comment type="similarity">
    <text evidence="1">Belongs to the bacterial ribosomal protein bL34 family.</text>
</comment>
<name>RL34_XANOR</name>
<dbReference type="EMBL" id="AE013598">
    <property type="protein sequence ID" value="ABJ90056.1"/>
    <property type="molecule type" value="Genomic_DNA"/>
</dbReference>
<dbReference type="SMR" id="Q05HP6"/>
<dbReference type="STRING" id="291331.XOO4957"/>
<dbReference type="KEGG" id="xoo:XOO4957"/>
<dbReference type="HOGENOM" id="CLU_129938_2_0_6"/>
<dbReference type="Proteomes" id="UP000006735">
    <property type="component" value="Chromosome"/>
</dbReference>
<dbReference type="GO" id="GO:1990904">
    <property type="term" value="C:ribonucleoprotein complex"/>
    <property type="evidence" value="ECO:0007669"/>
    <property type="project" value="UniProtKB-KW"/>
</dbReference>
<dbReference type="GO" id="GO:0005840">
    <property type="term" value="C:ribosome"/>
    <property type="evidence" value="ECO:0007669"/>
    <property type="project" value="UniProtKB-KW"/>
</dbReference>
<dbReference type="GO" id="GO:0003735">
    <property type="term" value="F:structural constituent of ribosome"/>
    <property type="evidence" value="ECO:0007669"/>
    <property type="project" value="InterPro"/>
</dbReference>
<dbReference type="GO" id="GO:0006412">
    <property type="term" value="P:translation"/>
    <property type="evidence" value="ECO:0007669"/>
    <property type="project" value="UniProtKB-UniRule"/>
</dbReference>
<dbReference type="FunFam" id="1.10.287.3980:FF:000001">
    <property type="entry name" value="Mitochondrial ribosomal protein L34"/>
    <property type="match status" value="1"/>
</dbReference>
<dbReference type="Gene3D" id="1.10.287.3980">
    <property type="match status" value="1"/>
</dbReference>
<dbReference type="HAMAP" id="MF_00391">
    <property type="entry name" value="Ribosomal_bL34"/>
    <property type="match status" value="1"/>
</dbReference>
<dbReference type="InterPro" id="IPR000271">
    <property type="entry name" value="Ribosomal_bL34"/>
</dbReference>
<dbReference type="InterPro" id="IPR020939">
    <property type="entry name" value="Ribosomal_bL34_CS"/>
</dbReference>
<dbReference type="NCBIfam" id="TIGR01030">
    <property type="entry name" value="rpmH_bact"/>
    <property type="match status" value="1"/>
</dbReference>
<dbReference type="PANTHER" id="PTHR14503:SF4">
    <property type="entry name" value="LARGE RIBOSOMAL SUBUNIT PROTEIN BL34M"/>
    <property type="match status" value="1"/>
</dbReference>
<dbReference type="PANTHER" id="PTHR14503">
    <property type="entry name" value="MITOCHONDRIAL RIBOSOMAL PROTEIN 34 FAMILY MEMBER"/>
    <property type="match status" value="1"/>
</dbReference>
<dbReference type="Pfam" id="PF00468">
    <property type="entry name" value="Ribosomal_L34"/>
    <property type="match status" value="1"/>
</dbReference>
<dbReference type="PROSITE" id="PS00784">
    <property type="entry name" value="RIBOSOMAL_L34"/>
    <property type="match status" value="1"/>
</dbReference>
<reference key="1">
    <citation type="journal article" date="2005" name="Nucleic Acids Res.">
        <title>The genome sequence of Xanthomonas oryzae pathovar oryzae KACC10331, the bacterial blight pathogen of rice.</title>
        <authorList>
            <person name="Lee B.-M."/>
            <person name="Park Y.-J."/>
            <person name="Park D.-S."/>
            <person name="Kang H.-W."/>
            <person name="Kim J.-G."/>
            <person name="Song E.-S."/>
            <person name="Park I.-C."/>
            <person name="Yoon U.-H."/>
            <person name="Hahn J.-H."/>
            <person name="Koo B.-S."/>
            <person name="Lee G.-B."/>
            <person name="Kim H."/>
            <person name="Park H.-S."/>
            <person name="Yoon K.-O."/>
            <person name="Kim J.-H."/>
            <person name="Jung C.-H."/>
            <person name="Koh N.-H."/>
            <person name="Seo J.-S."/>
            <person name="Go S.-J."/>
        </authorList>
    </citation>
    <scope>NUCLEOTIDE SEQUENCE [LARGE SCALE GENOMIC DNA]</scope>
    <source>
        <strain>KACC10331 / KXO85</strain>
    </source>
</reference>
<accession>Q05HP6</accession>
<organism>
    <name type="scientific">Xanthomonas oryzae pv. oryzae (strain KACC10331 / KXO85)</name>
    <dbReference type="NCBI Taxonomy" id="291331"/>
    <lineage>
        <taxon>Bacteria</taxon>
        <taxon>Pseudomonadati</taxon>
        <taxon>Pseudomonadota</taxon>
        <taxon>Gammaproteobacteria</taxon>
        <taxon>Lysobacterales</taxon>
        <taxon>Lysobacteraceae</taxon>
        <taxon>Xanthomonas</taxon>
    </lineage>
</organism>